<organism>
    <name type="scientific">Brucella abortus (strain 2308)</name>
    <dbReference type="NCBI Taxonomy" id="359391"/>
    <lineage>
        <taxon>Bacteria</taxon>
        <taxon>Pseudomonadati</taxon>
        <taxon>Pseudomonadota</taxon>
        <taxon>Alphaproteobacteria</taxon>
        <taxon>Hyphomicrobiales</taxon>
        <taxon>Brucellaceae</taxon>
        <taxon>Brucella/Ochrobactrum group</taxon>
        <taxon>Brucella</taxon>
    </lineage>
</organism>
<sequence>MGQKINPIGLRLGINRTWDSRWYANTGEYGKLLHEDVKIREFLTEELKQAAISKIVIERPHKKCRVTIHSARPGIIIGKKGADIEKLRKKLSEMTNADTSLNIVEVRKPEVDATLIAQSIAQQLERRVAFRRAMKRAVQSAMRLGAEGIRINCSGRLGGAEIARMEWYREGRVPLHTLRADIDYGTAEAKTAYGICGVKVWVFKGEILEHDPMASERRAVEGDNQGSSSNRRRENA</sequence>
<proteinExistence type="inferred from homology"/>
<name>RS3_BRUA2</name>
<gene>
    <name evidence="1" type="primary">rpsC</name>
    <name type="ordered locus">BAB1_1249</name>
</gene>
<accession>Q2YRA1</accession>
<keyword id="KW-1185">Reference proteome</keyword>
<keyword id="KW-0687">Ribonucleoprotein</keyword>
<keyword id="KW-0689">Ribosomal protein</keyword>
<keyword id="KW-0694">RNA-binding</keyword>
<keyword id="KW-0699">rRNA-binding</keyword>
<dbReference type="EMBL" id="AM040264">
    <property type="protein sequence ID" value="CAJ11205.1"/>
    <property type="molecule type" value="Genomic_DNA"/>
</dbReference>
<dbReference type="RefSeq" id="WP_002964356.1">
    <property type="nucleotide sequence ID" value="NZ_KN046823.1"/>
</dbReference>
<dbReference type="SMR" id="Q2YRA1"/>
<dbReference type="STRING" id="359391.BAB1_1249"/>
<dbReference type="GeneID" id="97533530"/>
<dbReference type="KEGG" id="bmf:BAB1_1249"/>
<dbReference type="PATRIC" id="fig|359391.11.peg.149"/>
<dbReference type="HOGENOM" id="CLU_058591_0_2_5"/>
<dbReference type="PhylomeDB" id="Q2YRA1"/>
<dbReference type="Proteomes" id="UP000002719">
    <property type="component" value="Chromosome I"/>
</dbReference>
<dbReference type="GO" id="GO:0022627">
    <property type="term" value="C:cytosolic small ribosomal subunit"/>
    <property type="evidence" value="ECO:0007669"/>
    <property type="project" value="TreeGrafter"/>
</dbReference>
<dbReference type="GO" id="GO:0003729">
    <property type="term" value="F:mRNA binding"/>
    <property type="evidence" value="ECO:0007669"/>
    <property type="project" value="UniProtKB-UniRule"/>
</dbReference>
<dbReference type="GO" id="GO:0019843">
    <property type="term" value="F:rRNA binding"/>
    <property type="evidence" value="ECO:0007669"/>
    <property type="project" value="UniProtKB-UniRule"/>
</dbReference>
<dbReference type="GO" id="GO:0003735">
    <property type="term" value="F:structural constituent of ribosome"/>
    <property type="evidence" value="ECO:0007669"/>
    <property type="project" value="InterPro"/>
</dbReference>
<dbReference type="GO" id="GO:0006412">
    <property type="term" value="P:translation"/>
    <property type="evidence" value="ECO:0007669"/>
    <property type="project" value="UniProtKB-UniRule"/>
</dbReference>
<dbReference type="CDD" id="cd02412">
    <property type="entry name" value="KH-II_30S_S3"/>
    <property type="match status" value="1"/>
</dbReference>
<dbReference type="FunFam" id="3.30.1140.32:FF:000009">
    <property type="entry name" value="30S ribosomal protein S3"/>
    <property type="match status" value="1"/>
</dbReference>
<dbReference type="FunFam" id="3.30.300.20:FF:000001">
    <property type="entry name" value="30S ribosomal protein S3"/>
    <property type="match status" value="1"/>
</dbReference>
<dbReference type="Gene3D" id="3.30.300.20">
    <property type="match status" value="1"/>
</dbReference>
<dbReference type="Gene3D" id="3.30.1140.32">
    <property type="entry name" value="Ribosomal protein S3, C-terminal domain"/>
    <property type="match status" value="1"/>
</dbReference>
<dbReference type="HAMAP" id="MF_01309_B">
    <property type="entry name" value="Ribosomal_uS3_B"/>
    <property type="match status" value="1"/>
</dbReference>
<dbReference type="InterPro" id="IPR004087">
    <property type="entry name" value="KH_dom"/>
</dbReference>
<dbReference type="InterPro" id="IPR015946">
    <property type="entry name" value="KH_dom-like_a/b"/>
</dbReference>
<dbReference type="InterPro" id="IPR004044">
    <property type="entry name" value="KH_dom_type_2"/>
</dbReference>
<dbReference type="InterPro" id="IPR009019">
    <property type="entry name" value="KH_sf_prok-type"/>
</dbReference>
<dbReference type="InterPro" id="IPR036419">
    <property type="entry name" value="Ribosomal_S3_C_sf"/>
</dbReference>
<dbReference type="InterPro" id="IPR005704">
    <property type="entry name" value="Ribosomal_uS3_bac-typ"/>
</dbReference>
<dbReference type="InterPro" id="IPR001351">
    <property type="entry name" value="Ribosomal_uS3_C"/>
</dbReference>
<dbReference type="InterPro" id="IPR018280">
    <property type="entry name" value="Ribosomal_uS3_CS"/>
</dbReference>
<dbReference type="NCBIfam" id="TIGR01009">
    <property type="entry name" value="rpsC_bact"/>
    <property type="match status" value="1"/>
</dbReference>
<dbReference type="PANTHER" id="PTHR11760">
    <property type="entry name" value="30S/40S RIBOSOMAL PROTEIN S3"/>
    <property type="match status" value="1"/>
</dbReference>
<dbReference type="PANTHER" id="PTHR11760:SF19">
    <property type="entry name" value="SMALL RIBOSOMAL SUBUNIT PROTEIN US3C"/>
    <property type="match status" value="1"/>
</dbReference>
<dbReference type="Pfam" id="PF07650">
    <property type="entry name" value="KH_2"/>
    <property type="match status" value="1"/>
</dbReference>
<dbReference type="Pfam" id="PF00189">
    <property type="entry name" value="Ribosomal_S3_C"/>
    <property type="match status" value="1"/>
</dbReference>
<dbReference type="SMART" id="SM00322">
    <property type="entry name" value="KH"/>
    <property type="match status" value="1"/>
</dbReference>
<dbReference type="SUPFAM" id="SSF54814">
    <property type="entry name" value="Prokaryotic type KH domain (KH-domain type II)"/>
    <property type="match status" value="1"/>
</dbReference>
<dbReference type="SUPFAM" id="SSF54821">
    <property type="entry name" value="Ribosomal protein S3 C-terminal domain"/>
    <property type="match status" value="1"/>
</dbReference>
<dbReference type="PROSITE" id="PS50823">
    <property type="entry name" value="KH_TYPE_2"/>
    <property type="match status" value="1"/>
</dbReference>
<dbReference type="PROSITE" id="PS00548">
    <property type="entry name" value="RIBOSOMAL_S3"/>
    <property type="match status" value="1"/>
</dbReference>
<comment type="function">
    <text evidence="1">Binds the lower part of the 30S subunit head. Binds mRNA in the 70S ribosome, positioning it for translation.</text>
</comment>
<comment type="subunit">
    <text evidence="1">Part of the 30S ribosomal subunit. Forms a tight complex with proteins S10 and S14.</text>
</comment>
<comment type="similarity">
    <text evidence="1">Belongs to the universal ribosomal protein uS3 family.</text>
</comment>
<evidence type="ECO:0000255" key="1">
    <source>
        <dbReference type="HAMAP-Rule" id="MF_01309"/>
    </source>
</evidence>
<evidence type="ECO:0000256" key="2">
    <source>
        <dbReference type="SAM" id="MobiDB-lite"/>
    </source>
</evidence>
<evidence type="ECO:0000305" key="3"/>
<reference key="1">
    <citation type="journal article" date="2005" name="Infect. Immun.">
        <title>Whole-genome analyses of speciation events in pathogenic Brucellae.</title>
        <authorList>
            <person name="Chain P.S."/>
            <person name="Comerci D.J."/>
            <person name="Tolmasky M.E."/>
            <person name="Larimer F.W."/>
            <person name="Malfatti S.A."/>
            <person name="Vergez L.M."/>
            <person name="Aguero F."/>
            <person name="Land M.L."/>
            <person name="Ugalde R.A."/>
            <person name="Garcia E."/>
        </authorList>
    </citation>
    <scope>NUCLEOTIDE SEQUENCE [LARGE SCALE GENOMIC DNA]</scope>
    <source>
        <strain>2308</strain>
    </source>
</reference>
<protein>
    <recommendedName>
        <fullName evidence="1">Small ribosomal subunit protein uS3</fullName>
    </recommendedName>
    <alternativeName>
        <fullName evidence="3">30S ribosomal protein S3</fullName>
    </alternativeName>
</protein>
<feature type="chain" id="PRO_0000230683" description="Small ribosomal subunit protein uS3">
    <location>
        <begin position="1"/>
        <end position="236"/>
    </location>
</feature>
<feature type="domain" description="KH type-2" evidence="1">
    <location>
        <begin position="39"/>
        <end position="107"/>
    </location>
</feature>
<feature type="region of interest" description="Disordered" evidence="2">
    <location>
        <begin position="214"/>
        <end position="236"/>
    </location>
</feature>